<protein>
    <recommendedName>
        <fullName evidence="1">UPF0306 protein KPN78578_35330</fullName>
    </recommendedName>
</protein>
<reference key="1">
    <citation type="submission" date="2006-09" db="EMBL/GenBank/DDBJ databases">
        <authorList>
            <consortium name="The Klebsiella pneumonia Genome Sequencing Project"/>
            <person name="McClelland M."/>
            <person name="Sanderson E.K."/>
            <person name="Spieth J."/>
            <person name="Clifton W.S."/>
            <person name="Latreille P."/>
            <person name="Sabo A."/>
            <person name="Pepin K."/>
            <person name="Bhonagiri V."/>
            <person name="Porwollik S."/>
            <person name="Ali J."/>
            <person name="Wilson R.K."/>
        </authorList>
    </citation>
    <scope>NUCLEOTIDE SEQUENCE [LARGE SCALE GENOMIC DNA]</scope>
    <source>
        <strain>ATCC 700721 / MGH 78578</strain>
    </source>
</reference>
<comment type="similarity">
    <text evidence="1">Belongs to the UPF0306 family.</text>
</comment>
<feature type="chain" id="PRO_1000062215" description="UPF0306 protein KPN78578_35330">
    <location>
        <begin position="1"/>
        <end position="147"/>
    </location>
</feature>
<organism>
    <name type="scientific">Klebsiella pneumoniae subsp. pneumoniae (strain ATCC 700721 / MGH 78578)</name>
    <dbReference type="NCBI Taxonomy" id="272620"/>
    <lineage>
        <taxon>Bacteria</taxon>
        <taxon>Pseudomonadati</taxon>
        <taxon>Pseudomonadota</taxon>
        <taxon>Gammaproteobacteria</taxon>
        <taxon>Enterobacterales</taxon>
        <taxon>Enterobacteriaceae</taxon>
        <taxon>Klebsiella/Raoultella group</taxon>
        <taxon>Klebsiella</taxon>
        <taxon>Klebsiella pneumoniae complex</taxon>
    </lineage>
</organism>
<gene>
    <name type="ordered locus">KPN78578_35330</name>
    <name type="ORF">KPN_03562</name>
</gene>
<accession>A6TEH3</accession>
<dbReference type="EMBL" id="CP000647">
    <property type="protein sequence ID" value="ABR78957.1"/>
    <property type="molecule type" value="Genomic_DNA"/>
</dbReference>
<dbReference type="RefSeq" id="WP_002918223.1">
    <property type="nucleotide sequence ID" value="NC_009648.1"/>
</dbReference>
<dbReference type="SMR" id="A6TEH3"/>
<dbReference type="STRING" id="272620.KPN_03562"/>
<dbReference type="PaxDb" id="272620-KPN_03562"/>
<dbReference type="EnsemblBacteria" id="ABR78957">
    <property type="protein sequence ID" value="ABR78957"/>
    <property type="gene ID" value="KPN_03562"/>
</dbReference>
<dbReference type="KEGG" id="kpn:KPN_03562"/>
<dbReference type="HOGENOM" id="CLU_105087_3_0_6"/>
<dbReference type="Proteomes" id="UP000000265">
    <property type="component" value="Chromosome"/>
</dbReference>
<dbReference type="Gene3D" id="2.30.110.10">
    <property type="entry name" value="Electron Transport, Fmn-binding Protein, Chain A"/>
    <property type="match status" value="1"/>
</dbReference>
<dbReference type="HAMAP" id="MF_00764">
    <property type="entry name" value="UPF0306"/>
    <property type="match status" value="1"/>
</dbReference>
<dbReference type="InterPro" id="IPR012349">
    <property type="entry name" value="Split_barrel_FMN-bd"/>
</dbReference>
<dbReference type="InterPro" id="IPR011194">
    <property type="entry name" value="UPF0306"/>
</dbReference>
<dbReference type="NCBIfam" id="NF002900">
    <property type="entry name" value="PRK03467.1"/>
    <property type="match status" value="1"/>
</dbReference>
<dbReference type="PIRSF" id="PIRSF009554">
    <property type="entry name" value="UCP009554"/>
    <property type="match status" value="1"/>
</dbReference>
<dbReference type="SUPFAM" id="SSF50475">
    <property type="entry name" value="FMN-binding split barrel"/>
    <property type="match status" value="1"/>
</dbReference>
<proteinExistence type="inferred from homology"/>
<sequence length="147" mass="16924">MDTLAAIGRWLSKQHVVTWCVSREDELWCANAFYVYDPDTVAFYLLSEEHTRHGQMTGQRAKVAGTVNGQPKTVALIRGVQFKGEIRRLSGDEEARMRQRYVKRFPVARMLSAPVWEIRPDEIKFTDNTLGFGKKLHWRRDAGAEQA</sequence>
<evidence type="ECO:0000255" key="1">
    <source>
        <dbReference type="HAMAP-Rule" id="MF_00764"/>
    </source>
</evidence>
<name>Y3533_KLEP7</name>